<feature type="signal peptide" evidence="2">
    <location>
        <begin position="1"/>
        <end position="18"/>
    </location>
</feature>
<feature type="propeptide" id="PRO_0000393617" evidence="2">
    <location>
        <begin position="19"/>
        <end position="31"/>
    </location>
</feature>
<feature type="chain" id="PRO_0000393618" description="Probable endopolygalacturonase I">
    <location>
        <begin position="32"/>
        <end position="368"/>
    </location>
</feature>
<feature type="repeat" description="PbH1 1">
    <location>
        <begin position="162"/>
        <end position="192"/>
    </location>
</feature>
<feature type="repeat" description="PbH1 2">
    <location>
        <begin position="193"/>
        <end position="214"/>
    </location>
</feature>
<feature type="repeat" description="PbH1 3">
    <location>
        <begin position="244"/>
        <end position="265"/>
    </location>
</feature>
<feature type="repeat" description="PbH1 4">
    <location>
        <begin position="273"/>
        <end position="295"/>
    </location>
</feature>
<feature type="repeat" description="PbH1 5">
    <location>
        <begin position="307"/>
        <end position="328"/>
    </location>
</feature>
<feature type="active site" description="Proton donor" evidence="3">
    <location>
        <position position="207"/>
    </location>
</feature>
<feature type="active site" evidence="3">
    <location>
        <position position="229"/>
    </location>
</feature>
<feature type="glycosylation site" description="N-linked (GlcNAc...) asparagine" evidence="2">
    <location>
        <position position="246"/>
    </location>
</feature>
<feature type="disulfide bond" evidence="1">
    <location>
        <begin position="35"/>
        <end position="50"/>
    </location>
</feature>
<feature type="disulfide bond" evidence="1">
    <location>
        <begin position="209"/>
        <end position="225"/>
    </location>
</feature>
<feature type="disulfide bond" evidence="1">
    <location>
        <begin position="335"/>
        <end position="340"/>
    </location>
</feature>
<feature type="disulfide bond" evidence="1">
    <location>
        <begin position="359"/>
        <end position="368"/>
    </location>
</feature>
<sequence>MRSVEILGLAALGSLVAAAPSPSRVSNSAKKASSCTFTSAAQASKSASGCSEITLDNIAVPAGETLDLSHVDDGTTIIFEGTTSFGYKEWKGPLIQFAGTGITVKQNTGAVIDGDGSRWWDGKGTNGGKTKPKFMYAHKLRDSTITGLSIKNTPVQAISVQATNLQLTDITIDNSDGDENGGHNTDAFDIGESNGVYIRGAVVKNQDDCIAINSGENIEFSGGSCSGGHGLSIGSVGGRDNNIVKNVTITDSTISDSDNGVRIKTIYDATGSVGDVTYSNIKLSNIAKYGIVIEQDYENGSPTGTPTTGVPITGLTIDGITGSVASNAVQVYILCGDGSCSDWTWKGVDLTGGKKSSKCENVPSGASC</sequence>
<proteinExistence type="inferred from homology"/>
<dbReference type="EC" id="3.2.1.15"/>
<dbReference type="EMBL" id="DS027054">
    <property type="protein sequence ID" value="EAW10813.1"/>
    <property type="molecule type" value="Genomic_DNA"/>
</dbReference>
<dbReference type="RefSeq" id="XP_001272239.1">
    <property type="nucleotide sequence ID" value="XM_001272238.1"/>
</dbReference>
<dbReference type="SMR" id="A1CIV8"/>
<dbReference type="STRING" id="344612.A1CIV8"/>
<dbReference type="GlyCosmos" id="A1CIV8">
    <property type="glycosylation" value="1 site, No reported glycans"/>
</dbReference>
<dbReference type="EnsemblFungi" id="EAW10813">
    <property type="protein sequence ID" value="EAW10813"/>
    <property type="gene ID" value="ACLA_052860"/>
</dbReference>
<dbReference type="GeneID" id="4703970"/>
<dbReference type="KEGG" id="act:ACLA_052860"/>
<dbReference type="VEuPathDB" id="FungiDB:ACLA_052860"/>
<dbReference type="eggNOG" id="ENOG502QST2">
    <property type="taxonomic scope" value="Eukaryota"/>
</dbReference>
<dbReference type="HOGENOM" id="CLU_040116_0_0_1"/>
<dbReference type="OMA" id="WVNNLVV"/>
<dbReference type="OrthoDB" id="1546079at2759"/>
<dbReference type="Proteomes" id="UP000006701">
    <property type="component" value="Unassembled WGS sequence"/>
</dbReference>
<dbReference type="GO" id="GO:0005576">
    <property type="term" value="C:extracellular region"/>
    <property type="evidence" value="ECO:0000250"/>
    <property type="project" value="UniProtKB"/>
</dbReference>
<dbReference type="GO" id="GO:0047911">
    <property type="term" value="F:galacturan 1,4-alpha-galacturonidase activity"/>
    <property type="evidence" value="ECO:0000250"/>
    <property type="project" value="UniProtKB"/>
</dbReference>
<dbReference type="GO" id="GO:0004650">
    <property type="term" value="F:polygalacturonase activity"/>
    <property type="evidence" value="ECO:0000250"/>
    <property type="project" value="UniProtKB"/>
</dbReference>
<dbReference type="GO" id="GO:0071555">
    <property type="term" value="P:cell wall organization"/>
    <property type="evidence" value="ECO:0007669"/>
    <property type="project" value="UniProtKB-KW"/>
</dbReference>
<dbReference type="GO" id="GO:0045490">
    <property type="term" value="P:pectin catabolic process"/>
    <property type="evidence" value="ECO:0000250"/>
    <property type="project" value="UniProtKB"/>
</dbReference>
<dbReference type="FunFam" id="2.160.20.10:FF:000002">
    <property type="entry name" value="Endopolygalacturonase D"/>
    <property type="match status" value="1"/>
</dbReference>
<dbReference type="Gene3D" id="2.160.20.10">
    <property type="entry name" value="Single-stranded right-handed beta-helix, Pectin lyase-like"/>
    <property type="match status" value="1"/>
</dbReference>
<dbReference type="InterPro" id="IPR000743">
    <property type="entry name" value="Glyco_hydro_28"/>
</dbReference>
<dbReference type="InterPro" id="IPR050434">
    <property type="entry name" value="Glycosyl_hydrlase_28"/>
</dbReference>
<dbReference type="InterPro" id="IPR006626">
    <property type="entry name" value="PbH1"/>
</dbReference>
<dbReference type="InterPro" id="IPR012334">
    <property type="entry name" value="Pectin_lyas_fold"/>
</dbReference>
<dbReference type="InterPro" id="IPR011050">
    <property type="entry name" value="Pectin_lyase_fold/virulence"/>
</dbReference>
<dbReference type="PANTHER" id="PTHR31884:SF13">
    <property type="entry name" value="ENDOPOLYGALACTURONASE B"/>
    <property type="match status" value="1"/>
</dbReference>
<dbReference type="PANTHER" id="PTHR31884">
    <property type="entry name" value="POLYGALACTURONASE"/>
    <property type="match status" value="1"/>
</dbReference>
<dbReference type="Pfam" id="PF00295">
    <property type="entry name" value="Glyco_hydro_28"/>
    <property type="match status" value="1"/>
</dbReference>
<dbReference type="SMART" id="SM00710">
    <property type="entry name" value="PbH1"/>
    <property type="match status" value="5"/>
</dbReference>
<dbReference type="SUPFAM" id="SSF51126">
    <property type="entry name" value="Pectin lyase-like"/>
    <property type="match status" value="1"/>
</dbReference>
<dbReference type="PROSITE" id="PS00502">
    <property type="entry name" value="POLYGALACTURONASE"/>
    <property type="match status" value="1"/>
</dbReference>
<name>PGLR1_ASPCL</name>
<evidence type="ECO:0000250" key="1"/>
<evidence type="ECO:0000255" key="2"/>
<evidence type="ECO:0000255" key="3">
    <source>
        <dbReference type="PROSITE-ProRule" id="PRU10052"/>
    </source>
</evidence>
<evidence type="ECO:0000305" key="4"/>
<accession>A1CIV8</accession>
<protein>
    <recommendedName>
        <fullName>Probable endopolygalacturonase I</fullName>
        <ecNumber>3.2.1.15</ecNumber>
    </recommendedName>
    <alternativeName>
        <fullName>Pectinase 1</fullName>
    </alternativeName>
    <alternativeName>
        <fullName>Polygalacturonase I</fullName>
        <shortName>PG-I</shortName>
    </alternativeName>
</protein>
<comment type="function">
    <text evidence="1">Involved in maceration and soft-rotting of plant tissue. Hydrolyzes the 1,4-alpha glycosidic bonds of de-esterified pectate in the smooth region of the plant cell wall (By similarity).</text>
</comment>
<comment type="catalytic activity">
    <reaction>
        <text>(1,4-alpha-D-galacturonosyl)n+m + H2O = (1,4-alpha-D-galacturonosyl)n + (1,4-alpha-D-galacturonosyl)m.</text>
        <dbReference type="EC" id="3.2.1.15"/>
    </reaction>
</comment>
<comment type="subcellular location">
    <subcellularLocation>
        <location evidence="1">Secreted</location>
    </subcellularLocation>
</comment>
<comment type="similarity">
    <text evidence="4">Belongs to the glycosyl hydrolase 28 family.</text>
</comment>
<reference key="1">
    <citation type="journal article" date="2008" name="PLoS Genet.">
        <title>Genomic islands in the pathogenic filamentous fungus Aspergillus fumigatus.</title>
        <authorList>
            <person name="Fedorova N.D."/>
            <person name="Khaldi N."/>
            <person name="Joardar V.S."/>
            <person name="Maiti R."/>
            <person name="Amedeo P."/>
            <person name="Anderson M.J."/>
            <person name="Crabtree J."/>
            <person name="Silva J.C."/>
            <person name="Badger J.H."/>
            <person name="Albarraq A."/>
            <person name="Angiuoli S."/>
            <person name="Bussey H."/>
            <person name="Bowyer P."/>
            <person name="Cotty P.J."/>
            <person name="Dyer P.S."/>
            <person name="Egan A."/>
            <person name="Galens K."/>
            <person name="Fraser-Liggett C.M."/>
            <person name="Haas B.J."/>
            <person name="Inman J.M."/>
            <person name="Kent R."/>
            <person name="Lemieux S."/>
            <person name="Malavazi I."/>
            <person name="Orvis J."/>
            <person name="Roemer T."/>
            <person name="Ronning C.M."/>
            <person name="Sundaram J.P."/>
            <person name="Sutton G."/>
            <person name="Turner G."/>
            <person name="Venter J.C."/>
            <person name="White O.R."/>
            <person name="Whitty B.R."/>
            <person name="Youngman P."/>
            <person name="Wolfe K.H."/>
            <person name="Goldman G.H."/>
            <person name="Wortman J.R."/>
            <person name="Jiang B."/>
            <person name="Denning D.W."/>
            <person name="Nierman W.C."/>
        </authorList>
    </citation>
    <scope>NUCLEOTIDE SEQUENCE [LARGE SCALE GENOMIC DNA]</scope>
    <source>
        <strain>ATCC 1007 / CBS 513.65 / DSM 816 / NCTC 3887 / NRRL 1 / QM 1276 / 107</strain>
    </source>
</reference>
<gene>
    <name type="primary">pgaI</name>
    <name type="synonym">pg1</name>
    <name type="synonym">pga1</name>
    <name type="ORF">ACLA_052860</name>
</gene>
<organism>
    <name type="scientific">Aspergillus clavatus (strain ATCC 1007 / CBS 513.65 / DSM 816 / NCTC 3887 / NRRL 1 / QM 1276 / 107)</name>
    <dbReference type="NCBI Taxonomy" id="344612"/>
    <lineage>
        <taxon>Eukaryota</taxon>
        <taxon>Fungi</taxon>
        <taxon>Dikarya</taxon>
        <taxon>Ascomycota</taxon>
        <taxon>Pezizomycotina</taxon>
        <taxon>Eurotiomycetes</taxon>
        <taxon>Eurotiomycetidae</taxon>
        <taxon>Eurotiales</taxon>
        <taxon>Aspergillaceae</taxon>
        <taxon>Aspergillus</taxon>
        <taxon>Aspergillus subgen. Fumigati</taxon>
    </lineage>
</organism>
<keyword id="KW-0961">Cell wall biogenesis/degradation</keyword>
<keyword id="KW-1015">Disulfide bond</keyword>
<keyword id="KW-0325">Glycoprotein</keyword>
<keyword id="KW-0326">Glycosidase</keyword>
<keyword id="KW-0378">Hydrolase</keyword>
<keyword id="KW-1185">Reference proteome</keyword>
<keyword id="KW-0677">Repeat</keyword>
<keyword id="KW-0964">Secreted</keyword>
<keyword id="KW-0732">Signal</keyword>
<keyword id="KW-0865">Zymogen</keyword>